<accession>Q6XUD6</accession>
<evidence type="ECO:0000255" key="1">
    <source>
        <dbReference type="HAMAP-Rule" id="MF_04071"/>
    </source>
</evidence>
<evidence type="ECO:0000256" key="2">
    <source>
        <dbReference type="SAM" id="MobiDB-lite"/>
    </source>
</evidence>
<keyword id="KW-0106">Calcium</keyword>
<keyword id="KW-1015">Disulfide bond</keyword>
<keyword id="KW-0325">Glycoprotein</keyword>
<keyword id="KW-0326">Glycosidase</keyword>
<keyword id="KW-1032">Host cell membrane</keyword>
<keyword id="KW-1043">Host membrane</keyword>
<keyword id="KW-0378">Hydrolase</keyword>
<keyword id="KW-0472">Membrane</keyword>
<keyword id="KW-0479">Metal-binding</keyword>
<keyword id="KW-0735">Signal-anchor</keyword>
<keyword id="KW-0812">Transmembrane</keyword>
<keyword id="KW-1133">Transmembrane helix</keyword>
<keyword id="KW-0946">Virion</keyword>
<proteinExistence type="inferred from homology"/>
<dbReference type="EC" id="3.2.1.18" evidence="1"/>
<dbReference type="EMBL" id="AY209903">
    <property type="protein sequence ID" value="AAO46219.1"/>
    <property type="molecule type" value="Genomic_RNA"/>
</dbReference>
<dbReference type="EMBL" id="AB124655">
    <property type="protein sequence ID" value="BAD16639.1"/>
    <property type="molecule type" value="Genomic_RNA"/>
</dbReference>
<dbReference type="SMR" id="Q6XUD6"/>
<dbReference type="CAZy" id="GH34">
    <property type="family name" value="Glycoside Hydrolase Family 34"/>
</dbReference>
<dbReference type="GlyCosmos" id="Q6XUD6">
    <property type="glycosylation" value="8 sites, No reported glycans"/>
</dbReference>
<dbReference type="GO" id="GO:0020002">
    <property type="term" value="C:host cell plasma membrane"/>
    <property type="evidence" value="ECO:0007669"/>
    <property type="project" value="UniProtKB-SubCell"/>
</dbReference>
<dbReference type="GO" id="GO:0016020">
    <property type="term" value="C:membrane"/>
    <property type="evidence" value="ECO:0007669"/>
    <property type="project" value="UniProtKB-UniRule"/>
</dbReference>
<dbReference type="GO" id="GO:0055036">
    <property type="term" value="C:virion membrane"/>
    <property type="evidence" value="ECO:0007669"/>
    <property type="project" value="UniProtKB-SubCell"/>
</dbReference>
<dbReference type="GO" id="GO:0004308">
    <property type="term" value="F:exo-alpha-sialidase activity"/>
    <property type="evidence" value="ECO:0007669"/>
    <property type="project" value="UniProtKB-UniRule"/>
</dbReference>
<dbReference type="GO" id="GO:0046872">
    <property type="term" value="F:metal ion binding"/>
    <property type="evidence" value="ECO:0007669"/>
    <property type="project" value="UniProtKB-UniRule"/>
</dbReference>
<dbReference type="GO" id="GO:0005975">
    <property type="term" value="P:carbohydrate metabolic process"/>
    <property type="evidence" value="ECO:0007669"/>
    <property type="project" value="InterPro"/>
</dbReference>
<dbReference type="GO" id="GO:0046761">
    <property type="term" value="P:viral budding from plasma membrane"/>
    <property type="evidence" value="ECO:0007669"/>
    <property type="project" value="UniProtKB-UniRule"/>
</dbReference>
<dbReference type="CDD" id="cd15483">
    <property type="entry name" value="Influenza_NA"/>
    <property type="match status" value="1"/>
</dbReference>
<dbReference type="Gene3D" id="2.120.10.10">
    <property type="match status" value="1"/>
</dbReference>
<dbReference type="HAMAP" id="MF_04071">
    <property type="entry name" value="INFV_NRAM"/>
    <property type="match status" value="1"/>
</dbReference>
<dbReference type="InterPro" id="IPR001860">
    <property type="entry name" value="Glyco_hydro_34"/>
</dbReference>
<dbReference type="InterPro" id="IPR033654">
    <property type="entry name" value="Sialidase_Influenza_A/B"/>
</dbReference>
<dbReference type="InterPro" id="IPR036278">
    <property type="entry name" value="Sialidase_sf"/>
</dbReference>
<dbReference type="Pfam" id="PF00064">
    <property type="entry name" value="Neur"/>
    <property type="match status" value="1"/>
</dbReference>
<dbReference type="SUPFAM" id="SSF50939">
    <property type="entry name" value="Sialidases"/>
    <property type="match status" value="1"/>
</dbReference>
<sequence>MNPNQKIITIGSVSLTIATVCFLMQIAILATTVTLHFKQHECDSPASNQVMPCEPIIIERNITEIVYLNNTTIEKEICPEVVEYRNWSKPQCQITGFAPFSKDNSIRLSAGGDIWVTREPYVSCDPGKCYQFALGQGTTLDNKHSNGTIHDRSPHRTLLMNELGVPFHLGTKQVCAAWSSSSCHDGKAWLHVCVTGDDRNATASFIYDGRLVDSIGSWSQNILRTQESECVCINGTCTVVMTDGSASGRADTRILFIKEGKIVHIGPLSGSAQHIEECSCYPRYPDVRCICRDNWKGSNRPVIDINMEDYSIDSSYVCSGLVGDTPRNDDSSSNSNCRDPNNERGNPGVKGWAFDNGDDVWMGRTISKDLRSGYETFKVIGGWSTPNSKSQVNRQVIVDNNNWSGYSGIFSVEGKSCINRCFYVELIRGRPQETRVWWTSNSIVVFCGTSGTYGTGSWPDGANINFMPI</sequence>
<organismHost>
    <name type="scientific">Aves</name>
    <dbReference type="NCBI Taxonomy" id="8782"/>
</organismHost>
<organismHost>
    <name type="scientific">Homo sapiens</name>
    <name type="common">Human</name>
    <dbReference type="NCBI Taxonomy" id="9606"/>
</organismHost>
<protein>
    <recommendedName>
        <fullName evidence="1">Neuraminidase</fullName>
        <ecNumber evidence="1">3.2.1.18</ecNumber>
    </recommendedName>
</protein>
<feature type="chain" id="PRO_0000280120" description="Neuraminidase">
    <location>
        <begin position="1"/>
        <end position="469"/>
    </location>
</feature>
<feature type="topological domain" description="Intravirion" evidence="1">
    <location>
        <begin position="1"/>
        <end position="6"/>
    </location>
</feature>
<feature type="transmembrane region" description="Helical" evidence="1">
    <location>
        <begin position="7"/>
        <end position="29"/>
    </location>
</feature>
<feature type="topological domain" description="Virion surface" evidence="1">
    <location>
        <begin position="30"/>
        <end position="469"/>
    </location>
</feature>
<feature type="region of interest" description="Involved in apical transport and lipid raft association" evidence="1">
    <location>
        <begin position="11"/>
        <end position="33"/>
    </location>
</feature>
<feature type="region of interest" description="Hypervariable stalk region" evidence="1">
    <location>
        <begin position="36"/>
        <end position="88"/>
    </location>
</feature>
<feature type="region of interest" description="Head of neuraminidase" evidence="1">
    <location>
        <begin position="91"/>
        <end position="469"/>
    </location>
</feature>
<feature type="region of interest" description="Disordered" evidence="2">
    <location>
        <begin position="325"/>
        <end position="349"/>
    </location>
</feature>
<feature type="active site" description="Proton donor/acceptor" evidence="1">
    <location>
        <position position="151"/>
    </location>
</feature>
<feature type="active site" description="Nucleophile" evidence="1">
    <location>
        <position position="406"/>
    </location>
</feature>
<feature type="binding site" evidence="1">
    <location>
        <position position="118"/>
    </location>
    <ligand>
        <name>substrate</name>
    </ligand>
</feature>
<feature type="binding site" evidence="1">
    <location>
        <position position="152"/>
    </location>
    <ligand>
        <name>substrate</name>
    </ligand>
</feature>
<feature type="binding site" evidence="1">
    <location>
        <begin position="276"/>
        <end position="277"/>
    </location>
    <ligand>
        <name>substrate</name>
    </ligand>
</feature>
<feature type="binding site" evidence="1">
    <location>
        <position position="292"/>
    </location>
    <ligand>
        <name>substrate</name>
    </ligand>
</feature>
<feature type="binding site" evidence="1">
    <location>
        <position position="293"/>
    </location>
    <ligand>
        <name>Ca(2+)</name>
        <dbReference type="ChEBI" id="CHEBI:29108"/>
    </ligand>
</feature>
<feature type="binding site" evidence="1">
    <location>
        <position position="297"/>
    </location>
    <ligand>
        <name>Ca(2+)</name>
        <dbReference type="ChEBI" id="CHEBI:29108"/>
    </ligand>
</feature>
<feature type="binding site" evidence="1">
    <location>
        <position position="324"/>
    </location>
    <ligand>
        <name>Ca(2+)</name>
        <dbReference type="ChEBI" id="CHEBI:29108"/>
    </ligand>
</feature>
<feature type="binding site" evidence="1">
    <location>
        <position position="371"/>
    </location>
    <ligand>
        <name>substrate</name>
    </ligand>
</feature>
<feature type="glycosylation site" description="N-linked (GlcNAc...) asparagine; by host" evidence="1">
    <location>
        <position position="61"/>
    </location>
</feature>
<feature type="glycosylation site" description="N-linked (GlcNAc...) asparagine; by host" evidence="1">
    <location>
        <position position="69"/>
    </location>
</feature>
<feature type="glycosylation site" description="N-linked (GlcNAc...) asparagine; by host" evidence="1">
    <location>
        <position position="70"/>
    </location>
</feature>
<feature type="glycosylation site" description="N-linked (GlcNAc...) asparagine; by host" evidence="1">
    <location>
        <position position="86"/>
    </location>
</feature>
<feature type="glycosylation site" description="N-linked (GlcNAc...) asparagine; by host" evidence="1">
    <location>
        <position position="146"/>
    </location>
</feature>
<feature type="glycosylation site" description="N-linked (GlcNAc...) asparagine; by host" evidence="1">
    <location>
        <position position="200"/>
    </location>
</feature>
<feature type="glycosylation site" description="N-linked (GlcNAc...) asparagine; by host" evidence="1">
    <location>
        <position position="234"/>
    </location>
</feature>
<feature type="glycosylation site" description="N-linked (GlcNAc...) asparagine; by host" evidence="1">
    <location>
        <position position="402"/>
    </location>
</feature>
<feature type="disulfide bond" evidence="1">
    <location>
        <begin position="92"/>
        <end position="417"/>
    </location>
</feature>
<feature type="disulfide bond" evidence="1">
    <location>
        <begin position="124"/>
        <end position="129"/>
    </location>
</feature>
<feature type="disulfide bond" evidence="1">
    <location>
        <begin position="183"/>
        <end position="230"/>
    </location>
</feature>
<feature type="disulfide bond" evidence="1">
    <location>
        <begin position="232"/>
        <end position="237"/>
    </location>
</feature>
<feature type="disulfide bond" evidence="1">
    <location>
        <begin position="278"/>
        <end position="291"/>
    </location>
</feature>
<feature type="disulfide bond" evidence="1">
    <location>
        <begin position="280"/>
        <end position="289"/>
    </location>
</feature>
<feature type="disulfide bond" evidence="1">
    <location>
        <begin position="318"/>
        <end position="337"/>
    </location>
</feature>
<feature type="disulfide bond" evidence="1">
    <location>
        <begin position="421"/>
        <end position="447"/>
    </location>
</feature>
<organism>
    <name type="scientific">Influenza A virus (strain A/Ann Arbor/6/1960 H2N2)</name>
    <dbReference type="NCBI Taxonomy" id="384498"/>
    <lineage>
        <taxon>Viruses</taxon>
        <taxon>Riboviria</taxon>
        <taxon>Orthornavirae</taxon>
        <taxon>Negarnaviricota</taxon>
        <taxon>Polyploviricotina</taxon>
        <taxon>Insthoviricetes</taxon>
        <taxon>Articulavirales</taxon>
        <taxon>Orthomyxoviridae</taxon>
        <taxon>Alphainfluenzavirus</taxon>
        <taxon>Alphainfluenzavirus influenzae</taxon>
        <taxon>Influenza A virus</taxon>
    </lineage>
</organism>
<comment type="function">
    <text evidence="1">Catalyzes the removal of terminal sialic acid residues from viral and cellular glycoconjugates. Cleaves off the terminal sialic acids on the glycosylated HA during virus budding to facilitate virus release. Additionally helps virus spread through the circulation by further removing sialic acids from the cell surface. These cleavages prevent self-aggregation and ensure the efficient spread of the progeny virus from cell to cell. Otherwise, infection would be limited to one round of replication. Described as a receptor-destroying enzyme because it cleaves a terminal sialic acid from the cellular receptors. May facilitate viral invasion of the upper airways by cleaving the sialic acid moieties on the mucin of the airway epithelial cells. Likely to plays a role in the budding process through its association with lipid rafts during intracellular transport. May additionally display a raft-association independent effect on budding. Plays a role in the determination of host range restriction on replication and virulence. Sialidase activity in late endosome/lysosome traffic seems to enhance virus replication.</text>
</comment>
<comment type="catalytic activity">
    <reaction evidence="1">
        <text>Hydrolysis of alpha-(2-&gt;3)-, alpha-(2-&gt;6)-, alpha-(2-&gt;8)- glycosidic linkages of terminal sialic acid residues in oligosaccharides, glycoproteins, glycolipids, colominic acid and synthetic substrates.</text>
        <dbReference type="EC" id="3.2.1.18"/>
    </reaction>
</comment>
<comment type="cofactor">
    <cofactor evidence="1">
        <name>Ca(2+)</name>
        <dbReference type="ChEBI" id="CHEBI:29108"/>
    </cofactor>
</comment>
<comment type="activity regulation">
    <text evidence="1">Inhibited by the neuraminidase inhibitors zanamivir (Relenza) and oseltamivir (Tamiflu). These drugs interfere with the release of progeny virus from infected cells and are effective against all influenza strains. Resistance to neuraminidase inhibitors is quite rare.</text>
</comment>
<comment type="subunit">
    <text evidence="1">Homotetramer.</text>
</comment>
<comment type="subcellular location">
    <subcellularLocation>
        <location evidence="1">Virion membrane</location>
    </subcellularLocation>
    <subcellularLocation>
        <location evidence="1">Host apical cell membrane</location>
        <topology evidence="1">Single-pass type II membrane protein</topology>
    </subcellularLocation>
    <text evidence="1">Preferentially accumulates at the apical plasma membrane in infected polarized epithelial cells, which is the virus assembly site. Uses lipid rafts for cell surface transport and apical sorting. In the virion, forms a mushroom-shaped spike on the surface of the membrane.</text>
</comment>
<comment type="domain">
    <text evidence="1">Intact N-terminus is essential for virion morphogenesis. Possesses two apical sorting signals, one in the ectodomain, which is likely to be a glycan, and the other in the transmembrane domain. The transmembrane domain also plays a role in lipid raft association.</text>
</comment>
<comment type="PTM">
    <text evidence="1">N-glycosylated.</text>
</comment>
<comment type="miscellaneous">
    <text>The influenza A genome consist of 8 RNA segments. Genetic variation of hemagglutinin and/or neuraminidase genes results in the emergence of new influenza strains. The mechanism of variation can be the result of point mutations or the result of genetic reassortment between segments of two different strains.</text>
</comment>
<comment type="similarity">
    <text evidence="1">Belongs to the glycosyl hydrolase 34 family.</text>
</comment>
<name>NRAM_I60A0</name>
<gene>
    <name evidence="1" type="primary">NA</name>
</gene>
<reference key="1">
    <citation type="journal article" date="2004" name="Virology">
        <title>Genetic analysis of human H2N2 and early H3N2 influenza viruses, 1957-1972: evidence for genetic divergence and multiple reassortment events.</title>
        <authorList>
            <person name="Lindstrom S.E."/>
            <person name="Cox N.J."/>
            <person name="Klimov A."/>
        </authorList>
    </citation>
    <scope>NUCLEOTIDE SEQUENCE [GENOMIC RNA]</scope>
</reference>
<reference key="2">
    <citation type="journal article" date="2004" name="FEBS Lett.">
        <title>Evolutional analysis of human influenza A virus N2 neuraminidase genes based on the transition of the low-pH stability of sialidase activity.</title>
        <authorList>
            <person name="Suzuki T."/>
            <person name="Takahashi T."/>
            <person name="Saito T."/>
            <person name="Guo C.T."/>
            <person name="Hidari K.I.-P.J."/>
            <person name="Miyamoto D."/>
            <person name="Suzuki Y."/>
        </authorList>
    </citation>
    <scope>NUCLEOTIDE SEQUENCE [GENOMIC RNA]</scope>
</reference>
<reference key="3">
    <citation type="journal article" date="2004" name="Virus Res.">
        <title>Assembly and budding of influenza virus.</title>
        <authorList>
            <person name="Nayak D.P."/>
            <person name="Hui E.K."/>
            <person name="Barman S."/>
        </authorList>
    </citation>
    <scope>REVIEW</scope>
</reference>
<reference key="4">
    <citation type="journal article" date="2005" name="N. Engl. J. Med.">
        <title>Neuraminidase inhibitors for influenza.</title>
        <authorList>
            <person name="Moscona A."/>
        </authorList>
    </citation>
    <scope>REVIEW</scope>
</reference>
<reference key="5">
    <citation type="journal article" date="2005" name="Biol. Pharm. Bull.">
        <title>Sialobiology of influenza: molecular mechanism of host range variation of influenza viruses.</title>
        <authorList>
            <person name="Suzuki Y."/>
        </authorList>
    </citation>
    <scope>REVIEW</scope>
</reference>